<sequence>MSDSTVAASASASASSSAKSSLSDLRQFRINKNASSVVASPSRTERVPGKKRIQVMADSDSDGNDSQTPKKTKLELTVKEKEERYMAAAKISPHFDTMAIQESLSRTNWDVAASVRYLRENCKPKGHNGPLAKSKLKPRSNGISGGNFSDNDHSDDDDVKQSKDQVYDSDDSDSEMSTKMTGQRKKVFQFMNEASLIELQSVKTLSEKKALAIIDVRPFSDWSDLRQKLESIRMSGDLLNYAQELINKQNTVAAILSKCNNMVSRLEKAISNGAGIVEQPKLLSSGLQLADYQIIGLNWLTVMHKQEMNGILADEMGLGKTIQVIAFLAYLKENGLSQAAHLIVVPSSTLDNWEAEISRWCPELVVEKYHGSQDERRRMRGRFAKDGFTGFDVLLTTYHIVGSTPEERKMFRVCKLDYVIFDEAHMLKNMTTQRYANLITINARMRILLTGTPLQNNLLELISLLCFVMPKFFAKSIEDIKSLFAKKGKSDGDQDEVSQFQETQIQRAKRIMKPFVLRRLKKDVLKNLPKKLSLVEKVPMSSQQKIYYHELVDYYSNNKGEVCSSSERAGIAIMMEMRRIANHPLLMRHYFTDANLRGFSKRLANASSFKKTNEQYIFEELAVMSDFQVYQMMNKHEFYDVKIPDNLICDSGKFLYLDTLLPKLKAEGHRVLLFSQFTMMLDIVEEYLRIRKFGFCRLDGATAVNVRQDLITDFNGDDSIFVFLLSTKAGGVGINLTAADTCVIHDIDFNPYNDKQAEDRCHRMGQQRPVTIYRLISESTIEEGILMAAEEKLKLEKDITSNEKGEVHEQRCVVKLLTTALGLDKDQEEQLNNSLNNSIASPAK</sequence>
<accession>Q9VL72</accession>
<accession>Q2PDU7</accession>
<accession>Q95ST4</accession>
<organism>
    <name type="scientific">Drosophila melanogaster</name>
    <name type="common">Fruit fly</name>
    <dbReference type="NCBI Taxonomy" id="7227"/>
    <lineage>
        <taxon>Eukaryota</taxon>
        <taxon>Metazoa</taxon>
        <taxon>Ecdysozoa</taxon>
        <taxon>Arthropoda</taxon>
        <taxon>Hexapoda</taxon>
        <taxon>Insecta</taxon>
        <taxon>Pterygota</taxon>
        <taxon>Neoptera</taxon>
        <taxon>Endopterygota</taxon>
        <taxon>Diptera</taxon>
        <taxon>Brachycera</taxon>
        <taxon>Muscomorpha</taxon>
        <taxon>Ephydroidea</taxon>
        <taxon>Drosophilidae</taxon>
        <taxon>Drosophila</taxon>
        <taxon>Sophophora</taxon>
    </lineage>
</organism>
<evidence type="ECO:0000250" key="1"/>
<evidence type="ECO:0000255" key="2">
    <source>
        <dbReference type="PROSITE-ProRule" id="PRU00541"/>
    </source>
</evidence>
<evidence type="ECO:0000255" key="3">
    <source>
        <dbReference type="PROSITE-ProRule" id="PRU00542"/>
    </source>
</evidence>
<evidence type="ECO:0000256" key="4">
    <source>
        <dbReference type="SAM" id="MobiDB-lite"/>
    </source>
</evidence>
<evidence type="ECO:0000269" key="5">
    <source>
    </source>
</evidence>
<evidence type="ECO:0000305" key="6"/>
<protein>
    <recommendedName>
        <fullName>SWI/SNF-related matrix-associated actin-dependent regulator of chromatin subfamily A containing DEAD/H box 1 homolog</fullName>
        <ecNumber>3.6.4.12</ecNumber>
    </recommendedName>
    <alternativeName>
        <fullName>Enhancer trap locus homolog 1</fullName>
        <shortName>Etl-1</shortName>
    </alternativeName>
</protein>
<reference key="1">
    <citation type="journal article" date="2000" name="Science">
        <title>The genome sequence of Drosophila melanogaster.</title>
        <authorList>
            <person name="Adams M.D."/>
            <person name="Celniker S.E."/>
            <person name="Holt R.A."/>
            <person name="Evans C.A."/>
            <person name="Gocayne J.D."/>
            <person name="Amanatides P.G."/>
            <person name="Scherer S.E."/>
            <person name="Li P.W."/>
            <person name="Hoskins R.A."/>
            <person name="Galle R.F."/>
            <person name="George R.A."/>
            <person name="Lewis S.E."/>
            <person name="Richards S."/>
            <person name="Ashburner M."/>
            <person name="Henderson S.N."/>
            <person name="Sutton G.G."/>
            <person name="Wortman J.R."/>
            <person name="Yandell M.D."/>
            <person name="Zhang Q."/>
            <person name="Chen L.X."/>
            <person name="Brandon R.C."/>
            <person name="Rogers Y.-H.C."/>
            <person name="Blazej R.G."/>
            <person name="Champe M."/>
            <person name="Pfeiffer B.D."/>
            <person name="Wan K.H."/>
            <person name="Doyle C."/>
            <person name="Baxter E.G."/>
            <person name="Helt G."/>
            <person name="Nelson C.R."/>
            <person name="Miklos G.L.G."/>
            <person name="Abril J.F."/>
            <person name="Agbayani A."/>
            <person name="An H.-J."/>
            <person name="Andrews-Pfannkoch C."/>
            <person name="Baldwin D."/>
            <person name="Ballew R.M."/>
            <person name="Basu A."/>
            <person name="Baxendale J."/>
            <person name="Bayraktaroglu L."/>
            <person name="Beasley E.M."/>
            <person name="Beeson K.Y."/>
            <person name="Benos P.V."/>
            <person name="Berman B.P."/>
            <person name="Bhandari D."/>
            <person name="Bolshakov S."/>
            <person name="Borkova D."/>
            <person name="Botchan M.R."/>
            <person name="Bouck J."/>
            <person name="Brokstein P."/>
            <person name="Brottier P."/>
            <person name="Burtis K.C."/>
            <person name="Busam D.A."/>
            <person name="Butler H."/>
            <person name="Cadieu E."/>
            <person name="Center A."/>
            <person name="Chandra I."/>
            <person name="Cherry J.M."/>
            <person name="Cawley S."/>
            <person name="Dahlke C."/>
            <person name="Davenport L.B."/>
            <person name="Davies P."/>
            <person name="de Pablos B."/>
            <person name="Delcher A."/>
            <person name="Deng Z."/>
            <person name="Mays A.D."/>
            <person name="Dew I."/>
            <person name="Dietz S.M."/>
            <person name="Dodson K."/>
            <person name="Doup L.E."/>
            <person name="Downes M."/>
            <person name="Dugan-Rocha S."/>
            <person name="Dunkov B.C."/>
            <person name="Dunn P."/>
            <person name="Durbin K.J."/>
            <person name="Evangelista C.C."/>
            <person name="Ferraz C."/>
            <person name="Ferriera S."/>
            <person name="Fleischmann W."/>
            <person name="Fosler C."/>
            <person name="Gabrielian A.E."/>
            <person name="Garg N.S."/>
            <person name="Gelbart W.M."/>
            <person name="Glasser K."/>
            <person name="Glodek A."/>
            <person name="Gong F."/>
            <person name="Gorrell J.H."/>
            <person name="Gu Z."/>
            <person name="Guan P."/>
            <person name="Harris M."/>
            <person name="Harris N.L."/>
            <person name="Harvey D.A."/>
            <person name="Heiman T.J."/>
            <person name="Hernandez J.R."/>
            <person name="Houck J."/>
            <person name="Hostin D."/>
            <person name="Houston K.A."/>
            <person name="Howland T.J."/>
            <person name="Wei M.-H."/>
            <person name="Ibegwam C."/>
            <person name="Jalali M."/>
            <person name="Kalush F."/>
            <person name="Karpen G.H."/>
            <person name="Ke Z."/>
            <person name="Kennison J.A."/>
            <person name="Ketchum K.A."/>
            <person name="Kimmel B.E."/>
            <person name="Kodira C.D."/>
            <person name="Kraft C.L."/>
            <person name="Kravitz S."/>
            <person name="Kulp D."/>
            <person name="Lai Z."/>
            <person name="Lasko P."/>
            <person name="Lei Y."/>
            <person name="Levitsky A.A."/>
            <person name="Li J.H."/>
            <person name="Li Z."/>
            <person name="Liang Y."/>
            <person name="Lin X."/>
            <person name="Liu X."/>
            <person name="Mattei B."/>
            <person name="McIntosh T.C."/>
            <person name="McLeod M.P."/>
            <person name="McPherson D."/>
            <person name="Merkulov G."/>
            <person name="Milshina N.V."/>
            <person name="Mobarry C."/>
            <person name="Morris J."/>
            <person name="Moshrefi A."/>
            <person name="Mount S.M."/>
            <person name="Moy M."/>
            <person name="Murphy B."/>
            <person name="Murphy L."/>
            <person name="Muzny D.M."/>
            <person name="Nelson D.L."/>
            <person name="Nelson D.R."/>
            <person name="Nelson K.A."/>
            <person name="Nixon K."/>
            <person name="Nusskern D.R."/>
            <person name="Pacleb J.M."/>
            <person name="Palazzolo M."/>
            <person name="Pittman G.S."/>
            <person name="Pan S."/>
            <person name="Pollard J."/>
            <person name="Puri V."/>
            <person name="Reese M.G."/>
            <person name="Reinert K."/>
            <person name="Remington K."/>
            <person name="Saunders R.D.C."/>
            <person name="Scheeler F."/>
            <person name="Shen H."/>
            <person name="Shue B.C."/>
            <person name="Siden-Kiamos I."/>
            <person name="Simpson M."/>
            <person name="Skupski M.P."/>
            <person name="Smith T.J."/>
            <person name="Spier E."/>
            <person name="Spradling A.C."/>
            <person name="Stapleton M."/>
            <person name="Strong R."/>
            <person name="Sun E."/>
            <person name="Svirskas R."/>
            <person name="Tector C."/>
            <person name="Turner R."/>
            <person name="Venter E."/>
            <person name="Wang A.H."/>
            <person name="Wang X."/>
            <person name="Wang Z.-Y."/>
            <person name="Wassarman D.A."/>
            <person name="Weinstock G.M."/>
            <person name="Weissenbach J."/>
            <person name="Williams S.M."/>
            <person name="Woodage T."/>
            <person name="Worley K.C."/>
            <person name="Wu D."/>
            <person name="Yang S."/>
            <person name="Yao Q.A."/>
            <person name="Ye J."/>
            <person name="Yeh R.-F."/>
            <person name="Zaveri J.S."/>
            <person name="Zhan M."/>
            <person name="Zhang G."/>
            <person name="Zhao Q."/>
            <person name="Zheng L."/>
            <person name="Zheng X.H."/>
            <person name="Zhong F.N."/>
            <person name="Zhong W."/>
            <person name="Zhou X."/>
            <person name="Zhu S.C."/>
            <person name="Zhu X."/>
            <person name="Smith H.O."/>
            <person name="Gibbs R.A."/>
            <person name="Myers E.W."/>
            <person name="Rubin G.M."/>
            <person name="Venter J.C."/>
        </authorList>
    </citation>
    <scope>NUCLEOTIDE SEQUENCE [LARGE SCALE GENOMIC DNA]</scope>
    <source>
        <strain>Berkeley</strain>
    </source>
</reference>
<reference key="2">
    <citation type="journal article" date="2002" name="Genome Biol.">
        <title>Annotation of the Drosophila melanogaster euchromatic genome: a systematic review.</title>
        <authorList>
            <person name="Misra S."/>
            <person name="Crosby M.A."/>
            <person name="Mungall C.J."/>
            <person name="Matthews B.B."/>
            <person name="Campbell K.S."/>
            <person name="Hradecky P."/>
            <person name="Huang Y."/>
            <person name="Kaminker J.S."/>
            <person name="Millburn G.H."/>
            <person name="Prochnik S.E."/>
            <person name="Smith C.D."/>
            <person name="Tupy J.L."/>
            <person name="Whitfield E.J."/>
            <person name="Bayraktaroglu L."/>
            <person name="Berman B.P."/>
            <person name="Bettencourt B.R."/>
            <person name="Celniker S.E."/>
            <person name="de Grey A.D.N.J."/>
            <person name="Drysdale R.A."/>
            <person name="Harris N.L."/>
            <person name="Richter J."/>
            <person name="Russo S."/>
            <person name="Schroeder A.J."/>
            <person name="Shu S.Q."/>
            <person name="Stapleton M."/>
            <person name="Yamada C."/>
            <person name="Ashburner M."/>
            <person name="Gelbart W.M."/>
            <person name="Rubin G.M."/>
            <person name="Lewis S.E."/>
        </authorList>
    </citation>
    <scope>GENOME REANNOTATION</scope>
    <source>
        <strain>Berkeley</strain>
    </source>
</reference>
<reference key="3">
    <citation type="journal article" date="2002" name="Genome Biol.">
        <title>A Drosophila full-length cDNA resource.</title>
        <authorList>
            <person name="Stapleton M."/>
            <person name="Carlson J.W."/>
            <person name="Brokstein P."/>
            <person name="Yu C."/>
            <person name="Champe M."/>
            <person name="George R.A."/>
            <person name="Guarin H."/>
            <person name="Kronmiller B."/>
            <person name="Pacleb J.M."/>
            <person name="Park S."/>
            <person name="Wan K.H."/>
            <person name="Rubin G.M."/>
            <person name="Celniker S.E."/>
        </authorList>
    </citation>
    <scope>NUCLEOTIDE SEQUENCE [LARGE SCALE MRNA] OF 1-636</scope>
    <source>
        <strain>Berkeley</strain>
        <tissue>Head</tissue>
    </source>
</reference>
<reference key="4">
    <citation type="journal article" date="2008" name="J. Proteome Res.">
        <title>Phosphoproteome analysis of Drosophila melanogaster embryos.</title>
        <authorList>
            <person name="Zhai B."/>
            <person name="Villen J."/>
            <person name="Beausoleil S.A."/>
            <person name="Mintseris J."/>
            <person name="Gygi S.P."/>
        </authorList>
    </citation>
    <scope>PHOSPHORYLATION [LARGE SCALE ANALYSIS] AT SER-834; SER-838 AND SER-841</scope>
    <scope>IDENTIFICATION BY MASS SPECTROMETRY</scope>
    <source>
        <tissue>Embryo</tissue>
    </source>
</reference>
<comment type="function">
    <text evidence="1">DNA helicase that possesses intrinsic ATP-dependent nucleosome-remodeling activity and is both required for DNA repair and heterochromatin organization. Promotes DNA end resection of double-strand breaks (DSBs) following DNA damage: probably acts by weakening histone DNA interactions in nucleosomes flanking DSBs (By similarity).</text>
</comment>
<comment type="catalytic activity">
    <reaction>
        <text>ATP + H2O = ADP + phosphate + H(+)</text>
        <dbReference type="Rhea" id="RHEA:13065"/>
        <dbReference type="ChEBI" id="CHEBI:15377"/>
        <dbReference type="ChEBI" id="CHEBI:15378"/>
        <dbReference type="ChEBI" id="CHEBI:30616"/>
        <dbReference type="ChEBI" id="CHEBI:43474"/>
        <dbReference type="ChEBI" id="CHEBI:456216"/>
        <dbReference type="EC" id="3.6.4.12"/>
    </reaction>
</comment>
<comment type="subcellular location">
    <subcellularLocation>
        <location evidence="1">Nucleus</location>
    </subcellularLocation>
</comment>
<comment type="similarity">
    <text evidence="6">Belongs to the SNF2/RAD54 helicase family.</text>
</comment>
<comment type="sequence caution" evidence="6">
    <conflict type="miscellaneous discrepancy">
        <sequence resource="EMBL-CDS" id="AAL28145"/>
    </conflict>
    <text>Probable cloning artifact.</text>
</comment>
<dbReference type="EC" id="3.6.4.12"/>
<dbReference type="EMBL" id="AE014134">
    <property type="protein sequence ID" value="AAF52824.1"/>
    <property type="molecule type" value="Genomic_DNA"/>
</dbReference>
<dbReference type="EMBL" id="AY060597">
    <property type="protein sequence ID" value="AAL28145.1"/>
    <property type="status" value="ALT_SEQ"/>
    <property type="molecule type" value="mRNA"/>
</dbReference>
<dbReference type="RefSeq" id="NP_609320.2">
    <property type="nucleotide sequence ID" value="NM_135476.4"/>
</dbReference>
<dbReference type="SMR" id="Q9VL72"/>
<dbReference type="BioGRID" id="60405">
    <property type="interactions" value="5"/>
</dbReference>
<dbReference type="FunCoup" id="Q9VL72">
    <property type="interactions" value="2519"/>
</dbReference>
<dbReference type="IntAct" id="Q9VL72">
    <property type="interactions" value="2"/>
</dbReference>
<dbReference type="STRING" id="7227.FBpp0079496"/>
<dbReference type="iPTMnet" id="Q9VL72"/>
<dbReference type="PaxDb" id="7227-FBpp0079496"/>
<dbReference type="EnsemblMetazoa" id="FBtr0079901">
    <property type="protein sequence ID" value="FBpp0079496"/>
    <property type="gene ID" value="FBgn0032157"/>
</dbReference>
<dbReference type="GeneID" id="34311"/>
<dbReference type="KEGG" id="dme:Dmel_CG5899"/>
<dbReference type="UCSC" id="CG5899-RA">
    <property type="organism name" value="d. melanogaster"/>
</dbReference>
<dbReference type="UCSC" id="CG5899-RB">
    <property type="organism name" value="d. melanogaster"/>
</dbReference>
<dbReference type="UCSC" id="CG5899-RC">
    <property type="organism name" value="d. melanogaster"/>
</dbReference>
<dbReference type="AGR" id="FB:FBgn0032157"/>
<dbReference type="CTD" id="34311"/>
<dbReference type="FlyBase" id="FBgn0032157">
    <property type="gene designation" value="Etl1"/>
</dbReference>
<dbReference type="VEuPathDB" id="VectorBase:FBgn0032157"/>
<dbReference type="eggNOG" id="KOG0389">
    <property type="taxonomic scope" value="Eukaryota"/>
</dbReference>
<dbReference type="GeneTree" id="ENSGT00910000144252"/>
<dbReference type="HOGENOM" id="CLU_000315_16_3_1"/>
<dbReference type="InParanoid" id="Q9VL72"/>
<dbReference type="OMA" id="MMLDVVE"/>
<dbReference type="OrthoDB" id="448448at2759"/>
<dbReference type="PhylomeDB" id="Q9VL72"/>
<dbReference type="SignaLink" id="Q9VL72"/>
<dbReference type="BioGRID-ORCS" id="34311">
    <property type="hits" value="0 hits in 1 CRISPR screen"/>
</dbReference>
<dbReference type="GenomeRNAi" id="34311"/>
<dbReference type="PRO" id="PR:Q9VL72"/>
<dbReference type="Proteomes" id="UP000000803">
    <property type="component" value="Chromosome 2L"/>
</dbReference>
<dbReference type="Bgee" id="FBgn0032157">
    <property type="expression patterns" value="Expressed in ovary and 77 other cell types or tissues"/>
</dbReference>
<dbReference type="GO" id="GO:0000785">
    <property type="term" value="C:chromatin"/>
    <property type="evidence" value="ECO:0000318"/>
    <property type="project" value="GO_Central"/>
</dbReference>
<dbReference type="GO" id="GO:0005634">
    <property type="term" value="C:nucleus"/>
    <property type="evidence" value="ECO:0007005"/>
    <property type="project" value="FlyBase"/>
</dbReference>
<dbReference type="GO" id="GO:0005524">
    <property type="term" value="F:ATP binding"/>
    <property type="evidence" value="ECO:0007669"/>
    <property type="project" value="UniProtKB-KW"/>
</dbReference>
<dbReference type="GO" id="GO:0016887">
    <property type="term" value="F:ATP hydrolysis activity"/>
    <property type="evidence" value="ECO:0007669"/>
    <property type="project" value="RHEA"/>
</dbReference>
<dbReference type="GO" id="GO:0003682">
    <property type="term" value="F:chromatin binding"/>
    <property type="evidence" value="ECO:0000318"/>
    <property type="project" value="GO_Central"/>
</dbReference>
<dbReference type="GO" id="GO:0003677">
    <property type="term" value="F:DNA binding"/>
    <property type="evidence" value="ECO:0000318"/>
    <property type="project" value="GO_Central"/>
</dbReference>
<dbReference type="GO" id="GO:0004386">
    <property type="term" value="F:helicase activity"/>
    <property type="evidence" value="ECO:0007669"/>
    <property type="project" value="UniProtKB-KW"/>
</dbReference>
<dbReference type="GO" id="GO:0140750">
    <property type="term" value="F:nucleosome array spacer activity"/>
    <property type="evidence" value="ECO:0000318"/>
    <property type="project" value="GO_Central"/>
</dbReference>
<dbReference type="GO" id="GO:0050829">
    <property type="term" value="P:defense response to Gram-negative bacterium"/>
    <property type="evidence" value="ECO:0007001"/>
    <property type="project" value="FlyBase"/>
</dbReference>
<dbReference type="GO" id="GO:0000729">
    <property type="term" value="P:DNA double-strand break processing"/>
    <property type="evidence" value="ECO:0000318"/>
    <property type="project" value="GO_Central"/>
</dbReference>
<dbReference type="GO" id="GO:0045089">
    <property type="term" value="P:positive regulation of innate immune response"/>
    <property type="evidence" value="ECO:0007001"/>
    <property type="project" value="FlyBase"/>
</dbReference>
<dbReference type="GO" id="GO:0045944">
    <property type="term" value="P:positive regulation of transcription by RNA polymerase II"/>
    <property type="evidence" value="ECO:0000318"/>
    <property type="project" value="GO_Central"/>
</dbReference>
<dbReference type="CDD" id="cd17998">
    <property type="entry name" value="DEXHc_SMARCAD1"/>
    <property type="match status" value="1"/>
</dbReference>
<dbReference type="CDD" id="cd18793">
    <property type="entry name" value="SF2_C_SNF"/>
    <property type="match status" value="1"/>
</dbReference>
<dbReference type="FunFam" id="3.40.50.300:FF:001629">
    <property type="entry name" value="Probable ATP-dependent helicase PF08_0048"/>
    <property type="match status" value="1"/>
</dbReference>
<dbReference type="FunFam" id="3.40.50.10810:FF:000014">
    <property type="entry name" value="SWI/SNF-related matrix-associated actin-dependent regulator of chromatin subfamily A containing DEAD/H box 1"/>
    <property type="match status" value="1"/>
</dbReference>
<dbReference type="Gene3D" id="3.40.50.300">
    <property type="entry name" value="P-loop containing nucleotide triphosphate hydrolases"/>
    <property type="match status" value="1"/>
</dbReference>
<dbReference type="Gene3D" id="3.40.50.10810">
    <property type="entry name" value="Tandem AAA-ATPase domain"/>
    <property type="match status" value="1"/>
</dbReference>
<dbReference type="InterPro" id="IPR014001">
    <property type="entry name" value="Helicase_ATP-bd"/>
</dbReference>
<dbReference type="InterPro" id="IPR001650">
    <property type="entry name" value="Helicase_C-like"/>
</dbReference>
<dbReference type="InterPro" id="IPR027417">
    <property type="entry name" value="P-loop_NTPase"/>
</dbReference>
<dbReference type="InterPro" id="IPR038718">
    <property type="entry name" value="SNF2-like_sf"/>
</dbReference>
<dbReference type="InterPro" id="IPR049730">
    <property type="entry name" value="SNF2/RAD54-like_C"/>
</dbReference>
<dbReference type="InterPro" id="IPR000330">
    <property type="entry name" value="SNF2_N"/>
</dbReference>
<dbReference type="PANTHER" id="PTHR10799">
    <property type="entry name" value="SNF2/RAD54 HELICASE FAMILY"/>
    <property type="match status" value="1"/>
</dbReference>
<dbReference type="Pfam" id="PF00271">
    <property type="entry name" value="Helicase_C"/>
    <property type="match status" value="1"/>
</dbReference>
<dbReference type="Pfam" id="PF00176">
    <property type="entry name" value="SNF2-rel_dom"/>
    <property type="match status" value="1"/>
</dbReference>
<dbReference type="SMART" id="SM00487">
    <property type="entry name" value="DEXDc"/>
    <property type="match status" value="1"/>
</dbReference>
<dbReference type="SMART" id="SM00490">
    <property type="entry name" value="HELICc"/>
    <property type="match status" value="1"/>
</dbReference>
<dbReference type="SUPFAM" id="SSF52540">
    <property type="entry name" value="P-loop containing nucleoside triphosphate hydrolases"/>
    <property type="match status" value="2"/>
</dbReference>
<dbReference type="PROSITE" id="PS51192">
    <property type="entry name" value="HELICASE_ATP_BIND_1"/>
    <property type="match status" value="1"/>
</dbReference>
<dbReference type="PROSITE" id="PS51194">
    <property type="entry name" value="HELICASE_CTER"/>
    <property type="match status" value="1"/>
</dbReference>
<gene>
    <name type="primary">Etl1</name>
    <name type="ORF">CG5899</name>
</gene>
<feature type="chain" id="PRO_0000420488" description="SWI/SNF-related matrix-associated actin-dependent regulator of chromatin subfamily A containing DEAD/H box 1 homolog">
    <location>
        <begin position="1"/>
        <end position="844"/>
    </location>
</feature>
<feature type="domain" description="Helicase ATP-binding" evidence="2">
    <location>
        <begin position="301"/>
        <end position="471"/>
    </location>
</feature>
<feature type="domain" description="Helicase C-terminal" evidence="3">
    <location>
        <begin position="656"/>
        <end position="818"/>
    </location>
</feature>
<feature type="region of interest" description="Disordered" evidence="4">
    <location>
        <begin position="1"/>
        <end position="75"/>
    </location>
</feature>
<feature type="region of interest" description="Disordered" evidence="4">
    <location>
        <begin position="121"/>
        <end position="180"/>
    </location>
</feature>
<feature type="short sequence motif" description="DEGH box">
    <location>
        <begin position="422"/>
        <end position="425"/>
    </location>
</feature>
<feature type="compositionally biased region" description="Low complexity" evidence="4">
    <location>
        <begin position="1"/>
        <end position="23"/>
    </location>
</feature>
<feature type="compositionally biased region" description="Polar residues" evidence="4">
    <location>
        <begin position="30"/>
        <end position="42"/>
    </location>
</feature>
<feature type="binding site" evidence="2">
    <location>
        <begin position="314"/>
        <end position="321"/>
    </location>
    <ligand>
        <name>ATP</name>
        <dbReference type="ChEBI" id="CHEBI:30616"/>
    </ligand>
</feature>
<feature type="modified residue" description="Phosphoserine" evidence="5">
    <location>
        <position position="834"/>
    </location>
</feature>
<feature type="modified residue" description="Phosphoserine" evidence="5">
    <location>
        <position position="838"/>
    </location>
</feature>
<feature type="modified residue" description="Phosphoserine" evidence="5">
    <location>
        <position position="841"/>
    </location>
</feature>
<keyword id="KW-0067">ATP-binding</keyword>
<keyword id="KW-0156">Chromatin regulator</keyword>
<keyword id="KW-0227">DNA damage</keyword>
<keyword id="KW-0234">DNA repair</keyword>
<keyword id="KW-0238">DNA-binding</keyword>
<keyword id="KW-0347">Helicase</keyword>
<keyword id="KW-0378">Hydrolase</keyword>
<keyword id="KW-0547">Nucleotide-binding</keyword>
<keyword id="KW-0539">Nucleus</keyword>
<keyword id="KW-0597">Phosphoprotein</keyword>
<keyword id="KW-1185">Reference proteome</keyword>
<name>SMRCD_DROME</name>
<proteinExistence type="evidence at protein level"/>